<evidence type="ECO:0000250" key="1"/>
<evidence type="ECO:0000255" key="2">
    <source>
        <dbReference type="PROSITE-ProRule" id="PRU00159"/>
    </source>
</evidence>
<evidence type="ECO:0000256" key="3">
    <source>
        <dbReference type="SAM" id="MobiDB-lite"/>
    </source>
</evidence>
<evidence type="ECO:0000269" key="4">
    <source>
    </source>
</evidence>
<evidence type="ECO:0000305" key="5"/>
<sequence>MGGRARSILRWLRHHRSRRVSSSSFHLTTTGDDTVKDLHDPRREDAEGDGWEEVHEGPESDPEEYIALVSEDAGTHLPVRTEPRRMDPSKKEPDFFTEYGEANRYKVSEVIGKGSYGVVAAAVDTQTGERVAIKKINDVFDHVSDATRILREIKLLRLLRHPDIVEIKHIMLPPSRREFRDIYVIFELMESDLHQVIKANDDLTPEHHQFFLYQLLRGMKYIHAASVFHRDLKPKNILANADCKLKVCDFGLARVSFNDTPSAIFWTDYVATRWYRAPELCGSFFSKYTPAIDIWSVGCIFAELLTGKPLFPGKNVVHQLDLMTDLLGTPSAESLAKIRNEKARRYLSNMRKKPRVPFTKKFPGVDPMALHLLERLLAFDPKDRPSAEEALTDPYFNGLANSEREPIAQPISKLEFEFEKRKLAKDDVRELIYREILEYHPHMLQEYLRGGDQMSFMYPSGVDRFKRQFAHLEEGVSKGEKSSPQLRQNASLPRERAIGNKHGDDEYHAKLNVGEKPCHASVTDGISKPLMSARSLLKSESISASKCIGEKPKQDRDQEDSLTESMDETADEVSEKVAQLKT</sequence>
<organism>
    <name type="scientific">Oryza sativa subsp. japonica</name>
    <name type="common">Rice</name>
    <dbReference type="NCBI Taxonomy" id="39947"/>
    <lineage>
        <taxon>Eukaryota</taxon>
        <taxon>Viridiplantae</taxon>
        <taxon>Streptophyta</taxon>
        <taxon>Embryophyta</taxon>
        <taxon>Tracheophyta</taxon>
        <taxon>Spermatophyta</taxon>
        <taxon>Magnoliopsida</taxon>
        <taxon>Liliopsida</taxon>
        <taxon>Poales</taxon>
        <taxon>Poaceae</taxon>
        <taxon>BOP clade</taxon>
        <taxon>Oryzoideae</taxon>
        <taxon>Oryzeae</taxon>
        <taxon>Oryzinae</taxon>
        <taxon>Oryza</taxon>
        <taxon>Oryza sativa</taxon>
    </lineage>
</organism>
<gene>
    <name type="primary">MPK17</name>
    <name type="ordered locus">Os05g0576800</name>
    <name type="ordered locus">LOC_Os05g50120</name>
    <name type="ORF">OJ1126_B10.5</name>
</gene>
<comment type="catalytic activity">
    <reaction>
        <text>L-seryl-[protein] + ATP = O-phospho-L-seryl-[protein] + ADP + H(+)</text>
        <dbReference type="Rhea" id="RHEA:17989"/>
        <dbReference type="Rhea" id="RHEA-COMP:9863"/>
        <dbReference type="Rhea" id="RHEA-COMP:11604"/>
        <dbReference type="ChEBI" id="CHEBI:15378"/>
        <dbReference type="ChEBI" id="CHEBI:29999"/>
        <dbReference type="ChEBI" id="CHEBI:30616"/>
        <dbReference type="ChEBI" id="CHEBI:83421"/>
        <dbReference type="ChEBI" id="CHEBI:456216"/>
        <dbReference type="EC" id="2.7.11.24"/>
    </reaction>
</comment>
<comment type="catalytic activity">
    <reaction>
        <text>L-threonyl-[protein] + ATP = O-phospho-L-threonyl-[protein] + ADP + H(+)</text>
        <dbReference type="Rhea" id="RHEA:46608"/>
        <dbReference type="Rhea" id="RHEA-COMP:11060"/>
        <dbReference type="Rhea" id="RHEA-COMP:11605"/>
        <dbReference type="ChEBI" id="CHEBI:15378"/>
        <dbReference type="ChEBI" id="CHEBI:30013"/>
        <dbReference type="ChEBI" id="CHEBI:30616"/>
        <dbReference type="ChEBI" id="CHEBI:61977"/>
        <dbReference type="ChEBI" id="CHEBI:456216"/>
        <dbReference type="EC" id="2.7.11.24"/>
    </reaction>
</comment>
<comment type="activity regulation">
    <text evidence="1">Activated by threonine and tyrosine phosphorylation.</text>
</comment>
<comment type="induction">
    <text evidence="4">By ethylene and infection with rice blast fungus (M.grisea).</text>
</comment>
<comment type="domain">
    <text>The TXY motif contains the threonine and tyrosine residues whose phosphorylation activates the MAP kinases.</text>
</comment>
<comment type="PTM">
    <text evidence="1">Dually phosphorylated on Thr-267 and Tyr-269, which activates the enzyme.</text>
</comment>
<comment type="similarity">
    <text evidence="5">Belongs to the protein kinase superfamily. CMGC Ser/Thr protein kinase family. MAP kinase subfamily.</text>
</comment>
<comment type="sequence caution" evidence="5">
    <conflict type="erroneous gene model prediction">
        <sequence resource="EMBL-CDS" id="AAT39148"/>
    </conflict>
</comment>
<feature type="chain" id="PRO_0000239760" description="Mitogen-activated protein kinase 17">
    <location>
        <begin position="1"/>
        <end position="582"/>
    </location>
</feature>
<feature type="domain" description="Protein kinase" evidence="2">
    <location>
        <begin position="105"/>
        <end position="396"/>
    </location>
</feature>
<feature type="region of interest" description="Disordered" evidence="3">
    <location>
        <begin position="22"/>
        <end position="61"/>
    </location>
</feature>
<feature type="region of interest" description="Disordered" evidence="3">
    <location>
        <begin position="474"/>
        <end position="502"/>
    </location>
</feature>
<feature type="region of interest" description="Disordered" evidence="3">
    <location>
        <begin position="542"/>
        <end position="582"/>
    </location>
</feature>
<feature type="short sequence motif" description="TXY">
    <location>
        <begin position="267"/>
        <end position="269"/>
    </location>
</feature>
<feature type="compositionally biased region" description="Basic and acidic residues" evidence="3">
    <location>
        <begin position="33"/>
        <end position="45"/>
    </location>
</feature>
<feature type="compositionally biased region" description="Polar residues" evidence="3">
    <location>
        <begin position="482"/>
        <end position="491"/>
    </location>
</feature>
<feature type="compositionally biased region" description="Basic and acidic residues" evidence="3">
    <location>
        <begin position="493"/>
        <end position="502"/>
    </location>
</feature>
<feature type="compositionally biased region" description="Acidic residues" evidence="3">
    <location>
        <begin position="557"/>
        <end position="572"/>
    </location>
</feature>
<feature type="active site" description="Proton acceptor" evidence="2">
    <location>
        <position position="231"/>
    </location>
</feature>
<feature type="binding site" evidence="2">
    <location>
        <begin position="111"/>
        <end position="119"/>
    </location>
    <ligand>
        <name>ATP</name>
        <dbReference type="ChEBI" id="CHEBI:30616"/>
    </ligand>
</feature>
<feature type="binding site" evidence="2">
    <location>
        <position position="134"/>
    </location>
    <ligand>
        <name>ATP</name>
        <dbReference type="ChEBI" id="CHEBI:30616"/>
    </ligand>
</feature>
<feature type="modified residue" description="Phosphothreonine" evidence="1">
    <location>
        <position position="267"/>
    </location>
</feature>
<feature type="modified residue" description="Phosphotyrosine" evidence="1">
    <location>
        <position position="269"/>
    </location>
</feature>
<name>MPK17_ORYSJ</name>
<protein>
    <recommendedName>
        <fullName>Mitogen-activated protein kinase 17</fullName>
        <shortName>MAP kinase 17</shortName>
        <ecNumber>2.7.11.24</ecNumber>
    </recommendedName>
</protein>
<accession>Q6L5F7</accession>
<accession>Q0DFQ5</accession>
<dbReference type="EC" id="2.7.11.24"/>
<dbReference type="EMBL" id="AC098571">
    <property type="protein sequence ID" value="AAT39148.1"/>
    <property type="status" value="ALT_SEQ"/>
    <property type="molecule type" value="Genomic_DNA"/>
</dbReference>
<dbReference type="EMBL" id="AP008211">
    <property type="protein sequence ID" value="BAF18318.1"/>
    <property type="molecule type" value="Genomic_DNA"/>
</dbReference>
<dbReference type="EMBL" id="AP014961">
    <property type="protein sequence ID" value="BAS95483.1"/>
    <property type="molecule type" value="Genomic_DNA"/>
</dbReference>
<dbReference type="EMBL" id="AK070644">
    <property type="protein sequence ID" value="BAG92074.1"/>
    <property type="molecule type" value="mRNA"/>
</dbReference>
<dbReference type="RefSeq" id="XP_015637399.1">
    <property type="nucleotide sequence ID" value="XM_015781913.1"/>
</dbReference>
<dbReference type="RefSeq" id="XP_015637400.1">
    <property type="nucleotide sequence ID" value="XM_015781914.1"/>
</dbReference>
<dbReference type="SMR" id="Q6L5F7"/>
<dbReference type="FunCoup" id="Q6L5F7">
    <property type="interactions" value="209"/>
</dbReference>
<dbReference type="STRING" id="39947.Q6L5F7"/>
<dbReference type="PaxDb" id="39947-Q6L5F7"/>
<dbReference type="EnsemblPlants" id="Os05t0576800-01">
    <property type="protein sequence ID" value="Os05t0576800-01"/>
    <property type="gene ID" value="Os05g0576800"/>
</dbReference>
<dbReference type="GeneID" id="4339697"/>
<dbReference type="Gramene" id="Os05t0576800-01">
    <property type="protein sequence ID" value="Os05t0576800-01"/>
    <property type="gene ID" value="Os05g0576800"/>
</dbReference>
<dbReference type="KEGG" id="dosa:Os05g0576800"/>
<dbReference type="eggNOG" id="KOG0660">
    <property type="taxonomic scope" value="Eukaryota"/>
</dbReference>
<dbReference type="HOGENOM" id="CLU_000288_181_5_1"/>
<dbReference type="InParanoid" id="Q6L5F7"/>
<dbReference type="OMA" id="NDLTHEH"/>
<dbReference type="OrthoDB" id="2396at2759"/>
<dbReference type="Proteomes" id="UP000000763">
    <property type="component" value="Chromosome 5"/>
</dbReference>
<dbReference type="Proteomes" id="UP000059680">
    <property type="component" value="Chromosome 5"/>
</dbReference>
<dbReference type="GO" id="GO:0005737">
    <property type="term" value="C:cytoplasm"/>
    <property type="evidence" value="ECO:0000318"/>
    <property type="project" value="GO_Central"/>
</dbReference>
<dbReference type="GO" id="GO:0005634">
    <property type="term" value="C:nucleus"/>
    <property type="evidence" value="ECO:0000318"/>
    <property type="project" value="GO_Central"/>
</dbReference>
<dbReference type="GO" id="GO:0005524">
    <property type="term" value="F:ATP binding"/>
    <property type="evidence" value="ECO:0007669"/>
    <property type="project" value="UniProtKB-KW"/>
</dbReference>
<dbReference type="GO" id="GO:0004707">
    <property type="term" value="F:MAP kinase activity"/>
    <property type="evidence" value="ECO:0007669"/>
    <property type="project" value="UniProtKB-EC"/>
</dbReference>
<dbReference type="GO" id="GO:0106310">
    <property type="term" value="F:protein serine kinase activity"/>
    <property type="evidence" value="ECO:0007669"/>
    <property type="project" value="RHEA"/>
</dbReference>
<dbReference type="GO" id="GO:0004674">
    <property type="term" value="F:protein serine/threonine kinase activity"/>
    <property type="evidence" value="ECO:0000318"/>
    <property type="project" value="GO_Central"/>
</dbReference>
<dbReference type="GO" id="GO:0035556">
    <property type="term" value="P:intracellular signal transduction"/>
    <property type="evidence" value="ECO:0000318"/>
    <property type="project" value="GO_Central"/>
</dbReference>
<dbReference type="CDD" id="cd07859">
    <property type="entry name" value="STKc_TDY_MAPK"/>
    <property type="match status" value="1"/>
</dbReference>
<dbReference type="FunFam" id="1.10.510.10:FF:000017">
    <property type="entry name" value="Mitogen-activated protein kinase"/>
    <property type="match status" value="1"/>
</dbReference>
<dbReference type="FunFam" id="3.30.200.20:FF:000046">
    <property type="entry name" value="Mitogen-activated protein kinase"/>
    <property type="match status" value="1"/>
</dbReference>
<dbReference type="FunFam" id="3.30.200.20:FF:000578">
    <property type="entry name" value="Mitogen-activated protein kinase"/>
    <property type="match status" value="1"/>
</dbReference>
<dbReference type="Gene3D" id="3.30.200.20">
    <property type="entry name" value="Phosphorylase Kinase, domain 1"/>
    <property type="match status" value="1"/>
</dbReference>
<dbReference type="Gene3D" id="1.10.510.10">
    <property type="entry name" value="Transferase(Phosphotransferase) domain 1"/>
    <property type="match status" value="1"/>
</dbReference>
<dbReference type="InterPro" id="IPR011009">
    <property type="entry name" value="Kinase-like_dom_sf"/>
</dbReference>
<dbReference type="InterPro" id="IPR050117">
    <property type="entry name" value="MAP_kinase"/>
</dbReference>
<dbReference type="InterPro" id="IPR003527">
    <property type="entry name" value="MAP_kinase_CS"/>
</dbReference>
<dbReference type="InterPro" id="IPR000719">
    <property type="entry name" value="Prot_kinase_dom"/>
</dbReference>
<dbReference type="InterPro" id="IPR017441">
    <property type="entry name" value="Protein_kinase_ATP_BS"/>
</dbReference>
<dbReference type="PANTHER" id="PTHR24055">
    <property type="entry name" value="MITOGEN-ACTIVATED PROTEIN KINASE"/>
    <property type="match status" value="1"/>
</dbReference>
<dbReference type="Pfam" id="PF00069">
    <property type="entry name" value="Pkinase"/>
    <property type="match status" value="1"/>
</dbReference>
<dbReference type="SMART" id="SM00220">
    <property type="entry name" value="S_TKc"/>
    <property type="match status" value="1"/>
</dbReference>
<dbReference type="SUPFAM" id="SSF56112">
    <property type="entry name" value="Protein kinase-like (PK-like)"/>
    <property type="match status" value="1"/>
</dbReference>
<dbReference type="PROSITE" id="PS01351">
    <property type="entry name" value="MAPK"/>
    <property type="match status" value="1"/>
</dbReference>
<dbReference type="PROSITE" id="PS00107">
    <property type="entry name" value="PROTEIN_KINASE_ATP"/>
    <property type="match status" value="1"/>
</dbReference>
<dbReference type="PROSITE" id="PS50011">
    <property type="entry name" value="PROTEIN_KINASE_DOM"/>
    <property type="match status" value="1"/>
</dbReference>
<keyword id="KW-0067">ATP-binding</keyword>
<keyword id="KW-0418">Kinase</keyword>
<keyword id="KW-0547">Nucleotide-binding</keyword>
<keyword id="KW-0597">Phosphoprotein</keyword>
<keyword id="KW-1185">Reference proteome</keyword>
<keyword id="KW-0723">Serine/threonine-protein kinase</keyword>
<keyword id="KW-0808">Transferase</keyword>
<reference key="1">
    <citation type="journal article" date="2005" name="Mol. Genet. Genomics">
        <title>A fine physical map of the rice chromosome 5.</title>
        <authorList>
            <person name="Cheng C.-H."/>
            <person name="Chung M.C."/>
            <person name="Liu S.-M."/>
            <person name="Chen S.-K."/>
            <person name="Kao F.Y."/>
            <person name="Lin S.-J."/>
            <person name="Hsiao S.-H."/>
            <person name="Tseng I.C."/>
            <person name="Hsing Y.-I.C."/>
            <person name="Wu H.-P."/>
            <person name="Chen C.-S."/>
            <person name="Shaw J.-F."/>
            <person name="Wu J."/>
            <person name="Matsumoto T."/>
            <person name="Sasaki T."/>
            <person name="Chen H.-C."/>
            <person name="Chow T.-Y."/>
        </authorList>
    </citation>
    <scope>NUCLEOTIDE SEQUENCE [LARGE SCALE GENOMIC DNA]</scope>
    <source>
        <strain>cv. Nipponbare</strain>
    </source>
</reference>
<reference key="2">
    <citation type="journal article" date="2005" name="Nature">
        <title>The map-based sequence of the rice genome.</title>
        <authorList>
            <consortium name="International rice genome sequencing project (IRGSP)"/>
        </authorList>
    </citation>
    <scope>NUCLEOTIDE SEQUENCE [LARGE SCALE GENOMIC DNA]</scope>
    <source>
        <strain>cv. Nipponbare</strain>
    </source>
</reference>
<reference key="3">
    <citation type="journal article" date="2008" name="Nucleic Acids Res.">
        <title>The rice annotation project database (RAP-DB): 2008 update.</title>
        <authorList>
            <consortium name="The rice annotation project (RAP)"/>
        </authorList>
    </citation>
    <scope>GENOME REANNOTATION</scope>
    <source>
        <strain>cv. Nipponbare</strain>
    </source>
</reference>
<reference key="4">
    <citation type="journal article" date="2013" name="Rice">
        <title>Improvement of the Oryza sativa Nipponbare reference genome using next generation sequence and optical map data.</title>
        <authorList>
            <person name="Kawahara Y."/>
            <person name="de la Bastide M."/>
            <person name="Hamilton J.P."/>
            <person name="Kanamori H."/>
            <person name="McCombie W.R."/>
            <person name="Ouyang S."/>
            <person name="Schwartz D.C."/>
            <person name="Tanaka T."/>
            <person name="Wu J."/>
            <person name="Zhou S."/>
            <person name="Childs K.L."/>
            <person name="Davidson R.M."/>
            <person name="Lin H."/>
            <person name="Quesada-Ocampo L."/>
            <person name="Vaillancourt B."/>
            <person name="Sakai H."/>
            <person name="Lee S.S."/>
            <person name="Kim J."/>
            <person name="Numa H."/>
            <person name="Itoh T."/>
            <person name="Buell C.R."/>
            <person name="Matsumoto T."/>
        </authorList>
    </citation>
    <scope>GENOME REANNOTATION</scope>
    <source>
        <strain>cv. Nipponbare</strain>
    </source>
</reference>
<reference key="5">
    <citation type="journal article" date="2003" name="Science">
        <title>Collection, mapping, and annotation of over 28,000 cDNA clones from japonica rice.</title>
        <authorList>
            <consortium name="The rice full-length cDNA consortium"/>
        </authorList>
    </citation>
    <scope>NUCLEOTIDE SEQUENCE [LARGE SCALE MRNA]</scope>
    <source>
        <strain>cv. Nipponbare</strain>
    </source>
</reference>
<reference key="6">
    <citation type="journal article" date="2006" name="Mol. Plant Microbe Interact.">
        <title>Molecular analysis of the rice MAP kinase gene family in relation to Magnaporthe grisea infection.</title>
        <authorList>
            <person name="Reyna N.S."/>
            <person name="Yang Y."/>
        </authorList>
    </citation>
    <scope>INDUCTION</scope>
    <scope>NOMENCLATURE</scope>
</reference>
<proteinExistence type="evidence at transcript level"/>